<accession>P0ADA6</accession>
<accession>P36671</accession>
<accession>P77210</accession>
<organism>
    <name type="scientific">Escherichia coli O6:H1 (strain CFT073 / ATCC 700928 / UPEC)</name>
    <dbReference type="NCBI Taxonomy" id="199310"/>
    <lineage>
        <taxon>Bacteria</taxon>
        <taxon>Pseudomonadati</taxon>
        <taxon>Pseudomonadota</taxon>
        <taxon>Gammaproteobacteria</taxon>
        <taxon>Enterobacterales</taxon>
        <taxon>Enterobacteriaceae</taxon>
        <taxon>Escherichia</taxon>
    </lineage>
</organism>
<evidence type="ECO:0000255" key="1">
    <source>
        <dbReference type="PROSITE-ProRule" id="PRU00303"/>
    </source>
</evidence>
<evidence type="ECO:0000305" key="2"/>
<dbReference type="EMBL" id="AE014075">
    <property type="protein sequence ID" value="AAN79024.1"/>
    <property type="status" value="ALT_INIT"/>
    <property type="molecule type" value="Genomic_DNA"/>
</dbReference>
<dbReference type="RefSeq" id="WP_001295326.1">
    <property type="nucleotide sequence ID" value="NZ_CP051263.1"/>
</dbReference>
<dbReference type="BMRB" id="P0ADA6"/>
<dbReference type="SMR" id="P0ADA6"/>
<dbReference type="STRING" id="199310.c0546"/>
<dbReference type="KEGG" id="ecc:c0546"/>
<dbReference type="eggNOG" id="COG3056">
    <property type="taxonomic scope" value="Bacteria"/>
</dbReference>
<dbReference type="HOGENOM" id="CLU_098976_0_0_6"/>
<dbReference type="Proteomes" id="UP000001410">
    <property type="component" value="Chromosome"/>
</dbReference>
<dbReference type="GO" id="GO:0005886">
    <property type="term" value="C:plasma membrane"/>
    <property type="evidence" value="ECO:0007669"/>
    <property type="project" value="UniProtKB-SubCell"/>
</dbReference>
<dbReference type="InterPro" id="IPR005619">
    <property type="entry name" value="Uncharacterised_YajG"/>
</dbReference>
<dbReference type="NCBIfam" id="NF008637">
    <property type="entry name" value="PRK11627.1"/>
    <property type="match status" value="1"/>
</dbReference>
<dbReference type="Pfam" id="PF03923">
    <property type="entry name" value="Lipoprotein_16"/>
    <property type="match status" value="1"/>
</dbReference>
<dbReference type="PROSITE" id="PS51257">
    <property type="entry name" value="PROKAR_LIPOPROTEIN"/>
    <property type="match status" value="1"/>
</dbReference>
<keyword id="KW-1003">Cell membrane</keyword>
<keyword id="KW-0449">Lipoprotein</keyword>
<keyword id="KW-0472">Membrane</keyword>
<keyword id="KW-0564">Palmitate</keyword>
<keyword id="KW-1185">Reference proteome</keyword>
<keyword id="KW-0732">Signal</keyword>
<reference key="1">
    <citation type="journal article" date="2002" name="Proc. Natl. Acad. Sci. U.S.A.">
        <title>Extensive mosaic structure revealed by the complete genome sequence of uropathogenic Escherichia coli.</title>
        <authorList>
            <person name="Welch R.A."/>
            <person name="Burland V."/>
            <person name="Plunkett G. III"/>
            <person name="Redford P."/>
            <person name="Roesch P."/>
            <person name="Rasko D."/>
            <person name="Buckles E.L."/>
            <person name="Liou S.-R."/>
            <person name="Boutin A."/>
            <person name="Hackett J."/>
            <person name="Stroud D."/>
            <person name="Mayhew G.F."/>
            <person name="Rose D.J."/>
            <person name="Zhou S."/>
            <person name="Schwartz D.C."/>
            <person name="Perna N.T."/>
            <person name="Mobley H.L.T."/>
            <person name="Donnenberg M.S."/>
            <person name="Blattner F.R."/>
        </authorList>
    </citation>
    <scope>NUCLEOTIDE SEQUENCE [LARGE SCALE GENOMIC DNA]</scope>
    <source>
        <strain>CFT073 / ATCC 700928 / UPEC</strain>
    </source>
</reference>
<feature type="signal peptide" evidence="1">
    <location>
        <begin position="1"/>
        <end position="17"/>
    </location>
</feature>
<feature type="chain" id="PRO_0000043184" description="Uncharacterized lipoprotein YajG">
    <location>
        <begin position="18"/>
        <end position="192"/>
    </location>
</feature>
<feature type="lipid moiety-binding region" description="N-palmitoyl cysteine" evidence="1">
    <location>
        <position position="18"/>
    </location>
</feature>
<feature type="lipid moiety-binding region" description="S-diacylglycerol cysteine" evidence="1">
    <location>
        <position position="18"/>
    </location>
</feature>
<comment type="subcellular location">
    <subcellularLocation>
        <location evidence="2">Cell membrane</location>
        <topology evidence="2">Lipid-anchor</topology>
    </subcellularLocation>
</comment>
<comment type="similarity">
    <text evidence="2">To H.influenzae HI_0162.</text>
</comment>
<comment type="sequence caution" evidence="2">
    <conflict type="erroneous initiation">
        <sequence resource="EMBL-CDS" id="AAN79024"/>
    </conflict>
</comment>
<protein>
    <recommendedName>
        <fullName>Uncharacterized lipoprotein YajG</fullName>
    </recommendedName>
</protein>
<proteinExistence type="inferred from homology"/>
<name>YAJG_ECOL6</name>
<sequence>MFKKILFPLVALFMLAGCAKPPTTIEVSPTITLPQQDPSLMGVTVSINGADQRTDQALAKVTRDNQIVTLTASRDLRFLLQEVLEKQMTARGYMVGPNGPVNLQIIVSQLYADVSQGNVRYNIATKADIAIIATAQNGNKMTKNYRASYNVEGAFQASNKNIADAVNSVLTDTIADMSQDTSIHEFIKQNAR</sequence>
<gene>
    <name type="primary">yajG</name>
    <name type="ordered locus">c0546</name>
</gene>